<gene>
    <name evidence="3" type="primary">AASS</name>
</gene>
<accession>A8E657</accession>
<proteinExistence type="evidence at transcript level"/>
<protein>
    <recommendedName>
        <fullName evidence="3">Alpha-aminoadipic semialdehyde synthase, mitochondrial</fullName>
    </recommendedName>
    <alternativeName>
        <fullName evidence="3">LKR/SDH</fullName>
    </alternativeName>
    <domain>
        <recommendedName>
            <fullName evidence="3">Lysine ketoglutarate reductase</fullName>
            <shortName evidence="3">LKR</shortName>
            <shortName>LOR</shortName>
            <ecNumber evidence="3">1.5.1.8</ecNumber>
        </recommendedName>
    </domain>
    <domain>
        <recommendedName>
            <fullName evidence="3">Saccharopine dehydrogenase</fullName>
            <shortName evidence="3">SDH</shortName>
            <ecNumber evidence="3">1.5.1.9</ecNumber>
        </recommendedName>
    </domain>
</protein>
<keyword id="KW-0007">Acetylation</keyword>
<keyword id="KW-0496">Mitochondrion</keyword>
<keyword id="KW-0511">Multifunctional enzyme</keyword>
<keyword id="KW-0520">NAD</keyword>
<keyword id="KW-0521">NADP</keyword>
<keyword id="KW-0560">Oxidoreductase</keyword>
<keyword id="KW-1185">Reference proteome</keyword>
<keyword id="KW-0809">Transit peptide</keyword>
<comment type="function">
    <text evidence="3">Bifunctional enzyme that catalyzes the first two steps in lysine degradation.</text>
</comment>
<comment type="catalytic activity">
    <reaction evidence="3">
        <text>L-saccharopine + NADP(+) + H2O = L-lysine + 2-oxoglutarate + NADPH + H(+)</text>
        <dbReference type="Rhea" id="RHEA:19373"/>
        <dbReference type="ChEBI" id="CHEBI:15377"/>
        <dbReference type="ChEBI" id="CHEBI:15378"/>
        <dbReference type="ChEBI" id="CHEBI:16810"/>
        <dbReference type="ChEBI" id="CHEBI:32551"/>
        <dbReference type="ChEBI" id="CHEBI:57783"/>
        <dbReference type="ChEBI" id="CHEBI:57951"/>
        <dbReference type="ChEBI" id="CHEBI:58349"/>
        <dbReference type="EC" id="1.5.1.8"/>
    </reaction>
    <physiologicalReaction direction="right-to-left" evidence="3">
        <dbReference type="Rhea" id="RHEA:19375"/>
    </physiologicalReaction>
</comment>
<comment type="catalytic activity">
    <reaction evidence="3">
        <text>L-saccharopine + NAD(+) + H2O = (S)-2-amino-6-oxohexanoate + L-glutamate + NADH + H(+)</text>
        <dbReference type="Rhea" id="RHEA:24520"/>
        <dbReference type="ChEBI" id="CHEBI:15377"/>
        <dbReference type="ChEBI" id="CHEBI:15378"/>
        <dbReference type="ChEBI" id="CHEBI:29985"/>
        <dbReference type="ChEBI" id="CHEBI:57540"/>
        <dbReference type="ChEBI" id="CHEBI:57945"/>
        <dbReference type="ChEBI" id="CHEBI:57951"/>
        <dbReference type="ChEBI" id="CHEBI:58321"/>
        <dbReference type="EC" id="1.5.1.9"/>
    </reaction>
    <physiologicalReaction direction="left-to-right" evidence="3">
        <dbReference type="Rhea" id="RHEA:24521"/>
    </physiologicalReaction>
</comment>
<comment type="pathway">
    <text evidence="3">Amino-acid degradation; L-lysine degradation via saccharopine pathway; glutaryl-CoA from L-lysine: step 1/6.</text>
</comment>
<comment type="pathway">
    <text evidence="3">Amino-acid degradation; L-lysine degradation via saccharopine pathway; glutaryl-CoA from L-lysine: step 2/6.</text>
</comment>
<comment type="subunit">
    <text evidence="1">Homotetramer.</text>
</comment>
<comment type="subcellular location">
    <subcellularLocation>
        <location evidence="3">Mitochondrion</location>
    </subcellularLocation>
</comment>
<comment type="domain">
    <text evidence="3">The N-terminal and the C-terminal domains contain respectively the lysine ketoglutarate reductase and saccharopine dehydrogenase activity.</text>
</comment>
<comment type="similarity">
    <text evidence="4">In the N-terminal section; belongs to the AlaDH/PNT family.</text>
</comment>
<comment type="similarity">
    <text evidence="4">In the C-terminal section; belongs to the saccharopine dehydrogenase family.</text>
</comment>
<reference evidence="5" key="1">
    <citation type="submission" date="2007-09" db="EMBL/GenBank/DDBJ databases">
        <authorList>
            <consortium name="NIH - Mammalian Gene Collection (MGC) project"/>
        </authorList>
    </citation>
    <scope>NUCLEOTIDE SEQUENCE [LARGE SCALE MRNA]</scope>
    <source>
        <strain evidence="5">Hereford</strain>
        <tissue evidence="5">Uterus</tissue>
    </source>
</reference>
<name>AASS_BOVIN</name>
<organism>
    <name type="scientific">Bos taurus</name>
    <name type="common">Bovine</name>
    <dbReference type="NCBI Taxonomy" id="9913"/>
    <lineage>
        <taxon>Eukaryota</taxon>
        <taxon>Metazoa</taxon>
        <taxon>Chordata</taxon>
        <taxon>Craniata</taxon>
        <taxon>Vertebrata</taxon>
        <taxon>Euteleostomi</taxon>
        <taxon>Mammalia</taxon>
        <taxon>Eutheria</taxon>
        <taxon>Laurasiatheria</taxon>
        <taxon>Artiodactyla</taxon>
        <taxon>Ruminantia</taxon>
        <taxon>Pecora</taxon>
        <taxon>Bovidae</taxon>
        <taxon>Bovinae</taxon>
        <taxon>Bos</taxon>
    </lineage>
</organism>
<feature type="transit peptide" description="Mitochondrion" evidence="4">
    <location>
        <begin position="1"/>
        <end position="27"/>
    </location>
</feature>
<feature type="chain" id="PRO_0000315867" description="Alpha-aminoadipic semialdehyde synthase, mitochondrial">
    <location>
        <begin position="28"/>
        <end position="926"/>
    </location>
</feature>
<feature type="region of interest" description="Lysine-ketoglutarate reductase" evidence="1">
    <location>
        <begin position="28"/>
        <end position="455"/>
    </location>
</feature>
<feature type="region of interest" description="Saccharopine dehydrogenase" evidence="1">
    <location>
        <begin position="477"/>
        <end position="926"/>
    </location>
</feature>
<feature type="binding site" evidence="3">
    <location>
        <position position="488"/>
    </location>
    <ligand>
        <name>NAD(+)</name>
        <dbReference type="ChEBI" id="CHEBI:57540"/>
    </ligand>
</feature>
<feature type="binding site" evidence="3">
    <location>
        <position position="512"/>
    </location>
    <ligand>
        <name>NAD(+)</name>
        <dbReference type="ChEBI" id="CHEBI:57540"/>
    </ligand>
</feature>
<feature type="binding site" evidence="3">
    <location>
        <position position="516"/>
    </location>
    <ligand>
        <name>NAD(+)</name>
        <dbReference type="ChEBI" id="CHEBI:57540"/>
    </ligand>
</feature>
<feature type="binding site" evidence="3">
    <location>
        <position position="554"/>
    </location>
    <ligand>
        <name>NAD(+)</name>
        <dbReference type="ChEBI" id="CHEBI:57540"/>
    </ligand>
</feature>
<feature type="binding site" evidence="3">
    <location>
        <position position="576"/>
    </location>
    <ligand>
        <name>NAD(+)</name>
        <dbReference type="ChEBI" id="CHEBI:57540"/>
    </ligand>
</feature>
<feature type="binding site" evidence="2">
    <location>
        <begin position="577"/>
        <end position="578"/>
    </location>
    <ligand>
        <name>L-saccharopine</name>
        <dbReference type="ChEBI" id="CHEBI:57951"/>
    </ligand>
</feature>
<feature type="binding site" evidence="3">
    <location>
        <position position="577"/>
    </location>
    <ligand>
        <name>NAD(+)</name>
        <dbReference type="ChEBI" id="CHEBI:57540"/>
    </ligand>
</feature>
<feature type="binding site" evidence="3">
    <location>
        <position position="603"/>
    </location>
    <ligand>
        <name>NAD(+)</name>
        <dbReference type="ChEBI" id="CHEBI:57540"/>
    </ligand>
</feature>
<feature type="binding site" evidence="2">
    <location>
        <position position="604"/>
    </location>
    <ligand>
        <name>L-saccharopine</name>
        <dbReference type="ChEBI" id="CHEBI:57951"/>
    </ligand>
</feature>
<feature type="binding site" evidence="3">
    <location>
        <position position="604"/>
    </location>
    <ligand>
        <name>NAD(+)</name>
        <dbReference type="ChEBI" id="CHEBI:57540"/>
    </ligand>
</feature>
<feature type="binding site" evidence="3">
    <location>
        <position position="605"/>
    </location>
    <ligand>
        <name>NAD(+)</name>
        <dbReference type="ChEBI" id="CHEBI:57540"/>
    </ligand>
</feature>
<feature type="binding site" evidence="2">
    <location>
        <position position="703"/>
    </location>
    <ligand>
        <name>L-saccharopine</name>
        <dbReference type="ChEBI" id="CHEBI:57951"/>
    </ligand>
</feature>
<feature type="binding site" evidence="2">
    <location>
        <begin position="724"/>
        <end position="726"/>
    </location>
    <ligand>
        <name>L-saccharopine</name>
        <dbReference type="ChEBI" id="CHEBI:57951"/>
    </ligand>
</feature>
<feature type="modified residue" description="N6-acetyllysine" evidence="1">
    <location>
        <position position="48"/>
    </location>
</feature>
<feature type="modified residue" description="N6-acetyllysine" evidence="1">
    <location>
        <position position="56"/>
    </location>
</feature>
<feature type="modified residue" description="N6-acetyllysine; alternate" evidence="1">
    <location>
        <position position="93"/>
    </location>
</feature>
<feature type="modified residue" description="N6-succinyllysine; alternate" evidence="1">
    <location>
        <position position="93"/>
    </location>
</feature>
<feature type="modified residue" description="N6-acetyllysine" evidence="1">
    <location>
        <position position="128"/>
    </location>
</feature>
<feature type="modified residue" description="N6-acetyllysine; alternate" evidence="1">
    <location>
        <position position="138"/>
    </location>
</feature>
<feature type="modified residue" description="N6-succinyllysine; alternate" evidence="1">
    <location>
        <position position="138"/>
    </location>
</feature>
<feature type="modified residue" description="N6-succinyllysine" evidence="1">
    <location>
        <position position="274"/>
    </location>
</feature>
<feature type="modified residue" description="N6-acetyllysine; alternate" evidence="1">
    <location>
        <position position="286"/>
    </location>
</feature>
<feature type="modified residue" description="N6-succinyllysine; alternate" evidence="1">
    <location>
        <position position="286"/>
    </location>
</feature>
<feature type="modified residue" description="N6-succinyllysine" evidence="1">
    <location>
        <position position="333"/>
    </location>
</feature>
<feature type="modified residue" description="N6-acetyllysine; alternate" evidence="1">
    <location>
        <position position="458"/>
    </location>
</feature>
<feature type="modified residue" description="N6-succinyllysine; alternate" evidence="1">
    <location>
        <position position="458"/>
    </location>
</feature>
<feature type="modified residue" description="N6-acetyllysine; alternate" evidence="1">
    <location>
        <position position="523"/>
    </location>
</feature>
<feature type="modified residue" description="N6-succinyllysine; alternate" evidence="1">
    <location>
        <position position="523"/>
    </location>
</feature>
<feature type="modified residue" description="N6-acetyllysine; alternate" evidence="1">
    <location>
        <position position="535"/>
    </location>
</feature>
<feature type="modified residue" description="N6-succinyllysine; alternate" evidence="1">
    <location>
        <position position="535"/>
    </location>
</feature>
<feature type="modified residue" description="N6-acetyllysine; alternate" evidence="1">
    <location>
        <position position="584"/>
    </location>
</feature>
<feature type="modified residue" description="N6-succinyllysine; alternate" evidence="1">
    <location>
        <position position="584"/>
    </location>
</feature>
<feature type="modified residue" description="N6-acetyllysine" evidence="1">
    <location>
        <position position="707"/>
    </location>
</feature>
<feature type="modified residue" description="N6-succinyllysine" evidence="1">
    <location>
        <position position="732"/>
    </location>
</feature>
<feature type="modified residue" description="N6-acetyllysine" evidence="1">
    <location>
        <position position="739"/>
    </location>
</feature>
<feature type="modified residue" description="N6-acetyllysine; alternate" evidence="1">
    <location>
        <position position="761"/>
    </location>
</feature>
<feature type="modified residue" description="N6-succinyllysine; alternate" evidence="1">
    <location>
        <position position="761"/>
    </location>
</feature>
<feature type="modified residue" description="N6-acetyllysine" evidence="1">
    <location>
        <position position="780"/>
    </location>
</feature>
<evidence type="ECO:0000250" key="1">
    <source>
        <dbReference type="UniProtKB" id="Q99K67"/>
    </source>
</evidence>
<evidence type="ECO:0000250" key="2">
    <source>
        <dbReference type="UniProtKB" id="Q9P4R4"/>
    </source>
</evidence>
<evidence type="ECO:0000250" key="3">
    <source>
        <dbReference type="UniProtKB" id="Q9UDR5"/>
    </source>
</evidence>
<evidence type="ECO:0000255" key="4"/>
<evidence type="ECO:0000312" key="5">
    <source>
        <dbReference type="EMBL" id="AAI53852.1"/>
    </source>
</evidence>
<dbReference type="EC" id="1.5.1.8" evidence="3"/>
<dbReference type="EC" id="1.5.1.9" evidence="3"/>
<dbReference type="EMBL" id="BC153851">
    <property type="protein sequence ID" value="AAI53852.1"/>
    <property type="molecule type" value="mRNA"/>
</dbReference>
<dbReference type="RefSeq" id="NP_001103267.1">
    <property type="nucleotide sequence ID" value="NM_001109797.1"/>
</dbReference>
<dbReference type="RefSeq" id="XP_024846466.1">
    <property type="nucleotide sequence ID" value="XM_024990698.2"/>
</dbReference>
<dbReference type="RefSeq" id="XP_059741589.1">
    <property type="nucleotide sequence ID" value="XM_059885606.1"/>
</dbReference>
<dbReference type="SMR" id="A8E657"/>
<dbReference type="FunCoup" id="A8E657">
    <property type="interactions" value="336"/>
</dbReference>
<dbReference type="STRING" id="9913.ENSBTAP00000016090"/>
<dbReference type="PaxDb" id="9913-ENSBTAP00000016090"/>
<dbReference type="PeptideAtlas" id="A8E657"/>
<dbReference type="GeneID" id="520865"/>
<dbReference type="KEGG" id="bta:520865"/>
<dbReference type="CTD" id="10157"/>
<dbReference type="VEuPathDB" id="HostDB:ENSBTAG00000012128"/>
<dbReference type="eggNOG" id="KOG0172">
    <property type="taxonomic scope" value="Eukaryota"/>
</dbReference>
<dbReference type="InParanoid" id="A8E657"/>
<dbReference type="OMA" id="TPHVHDI"/>
<dbReference type="OrthoDB" id="10059875at2759"/>
<dbReference type="Reactome" id="R-BTA-71064">
    <property type="pathway name" value="Lysine catabolism"/>
</dbReference>
<dbReference type="UniPathway" id="UPA00868">
    <property type="reaction ID" value="UER00835"/>
</dbReference>
<dbReference type="UniPathway" id="UPA00868">
    <property type="reaction ID" value="UER00836"/>
</dbReference>
<dbReference type="Proteomes" id="UP000009136">
    <property type="component" value="Chromosome 4"/>
</dbReference>
<dbReference type="Bgee" id="ENSBTAG00000012128">
    <property type="expression patterns" value="Expressed in adult mammalian kidney and 114 other cell types or tissues"/>
</dbReference>
<dbReference type="GO" id="GO:0005737">
    <property type="term" value="C:cytoplasm"/>
    <property type="evidence" value="ECO:0000318"/>
    <property type="project" value="GO_Central"/>
</dbReference>
<dbReference type="GO" id="GO:0005739">
    <property type="term" value="C:mitochondrion"/>
    <property type="evidence" value="ECO:0007669"/>
    <property type="project" value="UniProtKB-SubCell"/>
</dbReference>
<dbReference type="GO" id="GO:0047131">
    <property type="term" value="F:saccharopine dehydrogenase (NAD+, L-glutamate-forming) activity"/>
    <property type="evidence" value="ECO:0000250"/>
    <property type="project" value="UniProtKB"/>
</dbReference>
<dbReference type="GO" id="GO:0047130">
    <property type="term" value="F:saccharopine dehydrogenase (NADP+, L-lysine-forming) activity"/>
    <property type="evidence" value="ECO:0000250"/>
    <property type="project" value="UniProtKB"/>
</dbReference>
<dbReference type="GO" id="GO:0004753">
    <property type="term" value="F:saccharopine dehydrogenase activity"/>
    <property type="evidence" value="ECO:0000318"/>
    <property type="project" value="GO_Central"/>
</dbReference>
<dbReference type="GO" id="GO:0033512">
    <property type="term" value="P:L-lysine catabolic process to acetyl-CoA via saccharopine"/>
    <property type="evidence" value="ECO:0007669"/>
    <property type="project" value="UniProtKB-UniPathway"/>
</dbReference>
<dbReference type="GO" id="GO:0019878">
    <property type="term" value="P:lysine biosynthetic process via aminoadipic acid"/>
    <property type="evidence" value="ECO:0000318"/>
    <property type="project" value="GO_Central"/>
</dbReference>
<dbReference type="GO" id="GO:0006554">
    <property type="term" value="P:lysine catabolic process"/>
    <property type="evidence" value="ECO:0000250"/>
    <property type="project" value="UniProtKB"/>
</dbReference>
<dbReference type="CDD" id="cd12189">
    <property type="entry name" value="LKR_SDH_like"/>
    <property type="match status" value="1"/>
</dbReference>
<dbReference type="FunFam" id="1.10.1870.10:FF:000001">
    <property type="entry name" value="Alpha-aminoadipic semialdehyde synthase, mitochondrial"/>
    <property type="match status" value="1"/>
</dbReference>
<dbReference type="FunFam" id="3.30.360.10:FF:000008">
    <property type="entry name" value="Alpha-aminoadipic semialdehyde synthase, mitochondrial"/>
    <property type="match status" value="1"/>
</dbReference>
<dbReference type="FunFam" id="3.40.50.720:FF:000087">
    <property type="entry name" value="alpha-aminoadipic semialdehyde synthase, mitochondrial"/>
    <property type="match status" value="1"/>
</dbReference>
<dbReference type="FunFam" id="3.40.50.720:FF:000072">
    <property type="entry name" value="Saccharopine dehydrogenase [NADP(+), L-glutamate-forming]"/>
    <property type="match status" value="1"/>
</dbReference>
<dbReference type="Gene3D" id="3.30.360.10">
    <property type="entry name" value="Dihydrodipicolinate Reductase, domain 2"/>
    <property type="match status" value="1"/>
</dbReference>
<dbReference type="Gene3D" id="1.10.1870.10">
    <property type="entry name" value="Domain 3, Saccharopine reductase"/>
    <property type="match status" value="1"/>
</dbReference>
<dbReference type="Gene3D" id="3.40.50.720">
    <property type="entry name" value="NAD(P)-binding Rossmann-like Domain"/>
    <property type="match status" value="3"/>
</dbReference>
<dbReference type="InterPro" id="IPR051168">
    <property type="entry name" value="AASS"/>
</dbReference>
<dbReference type="InterPro" id="IPR007886">
    <property type="entry name" value="AlaDH/PNT_N"/>
</dbReference>
<dbReference type="InterPro" id="IPR007698">
    <property type="entry name" value="AlaDH/PNT_NAD(H)-bd"/>
</dbReference>
<dbReference type="InterPro" id="IPR036291">
    <property type="entry name" value="NAD(P)-bd_dom_sf"/>
</dbReference>
<dbReference type="InterPro" id="IPR032095">
    <property type="entry name" value="Sacchrp_dh-like_C"/>
</dbReference>
<dbReference type="InterPro" id="IPR005097">
    <property type="entry name" value="Sacchrp_dh_NADP-bd"/>
</dbReference>
<dbReference type="PANTHER" id="PTHR11133:SF22">
    <property type="entry name" value="ALPHA-AMINOADIPIC SEMIALDEHYDE SYNTHASE, MITOCHONDRIAL"/>
    <property type="match status" value="1"/>
</dbReference>
<dbReference type="PANTHER" id="PTHR11133">
    <property type="entry name" value="SACCHAROPINE DEHYDROGENASE"/>
    <property type="match status" value="1"/>
</dbReference>
<dbReference type="Pfam" id="PF05222">
    <property type="entry name" value="AlaDh_PNT_N"/>
    <property type="match status" value="1"/>
</dbReference>
<dbReference type="Pfam" id="PF16653">
    <property type="entry name" value="Sacchrp_dh_C"/>
    <property type="match status" value="1"/>
</dbReference>
<dbReference type="Pfam" id="PF03435">
    <property type="entry name" value="Sacchrp_dh_NADP"/>
    <property type="match status" value="1"/>
</dbReference>
<dbReference type="SMART" id="SM01002">
    <property type="entry name" value="AlaDh_PNT_C"/>
    <property type="match status" value="1"/>
</dbReference>
<dbReference type="SMART" id="SM01003">
    <property type="entry name" value="AlaDh_PNT_N"/>
    <property type="match status" value="1"/>
</dbReference>
<dbReference type="SUPFAM" id="SSF52283">
    <property type="entry name" value="Formate/glycerate dehydrogenase catalytic domain-like"/>
    <property type="match status" value="1"/>
</dbReference>
<dbReference type="SUPFAM" id="SSF55347">
    <property type="entry name" value="Glyceraldehyde-3-phosphate dehydrogenase-like, C-terminal domain"/>
    <property type="match status" value="1"/>
</dbReference>
<dbReference type="SUPFAM" id="SSF51735">
    <property type="entry name" value="NAD(P)-binding Rossmann-fold domains"/>
    <property type="match status" value="1"/>
</dbReference>
<sequence length="926" mass="102084">MLRVSRTKLGRLSPSLSRGLHHKAVMALRREDVNAWERRAPLAPRHVKGITNLGYKVLIQPSNRRAIHDKEYVKAGGILQEDISEACLILGVKRPPEEKLMPKKTYAFFSHTIKAQEANMGLLDEILKQEIRLIDYEKMVDHRGIRVVAFGQWAGVAGIINILHGMGLRLLALGHHTPFMHIGMAHNYRNSGQAVQAVRDAGYEISLGLMPKSIGPLTFVFTGTGNVSKGAQEIFNELPCEYVEPHELKEVSQNGDLRKVYGTVLSRHHHLVRKTDGVYDPVEYDKYPERYISRFNTDIAPYTTCLINGIYWEQNTPRLLTRQDAQSLLAPGKSPVAGVEGCPALPHKLVAICDISADTGGSIEFMTECTTIERPFCMYDADQHIIHDSVEGSGILMCSIDNLPAQLPIESTEYFGDMLYPYVEEMILSDATQPLESQNFSPVVRDAVIASNGMLSNKYKYIQKLRENREHAQSLSMGTKKKVLVLGSGYVSEPVLEYLLRDDSIEITVGSDMKNQIEQLGKKYNINPVSLHVGKQEEKLSSLVATQDLVISLLPYVLHPLVAKACIASKVNMITASYITPALKELEKSVEDAGITVIGELGLDPGLDHMLAMETIDKAKEVGATIESYVSYCGGLPAPECSDNPLRYKFSWSPVGVLMNIMQPATYLLNGKVVNAVGGVSFLDSVTPMDYFPGLNLEGYPNRDSTKYAEIYGIPSAHTLLRGTLRYKGYAKALSGFVKLGLINRDAFPALQPDANPLTWKELLCDLVGISSSSKCDVLKEAVFKKLGGDTTQLEALEWLGLLGDEQVPQAESLVDALSKHLAVKLSYGPGEKDMIVMRDSFGIRHPSGHLENKTIDLVVYGDVNGFSAMAKTVGLPTAMAAKMLLDGEIQAKGLMGPFSKEIYGPILERIKAEGIMYTTQSTIKL</sequence>